<accession>Q4QNB8</accession>
<comment type="function">
    <text evidence="1">Na(+)/H(+) antiporter that extrudes sodium in exchange for external protons.</text>
</comment>
<comment type="catalytic activity">
    <reaction evidence="1">
        <text>2 Na(+)(in) + 3 H(+)(out) = 2 Na(+)(out) + 3 H(+)(in)</text>
        <dbReference type="Rhea" id="RHEA:29247"/>
        <dbReference type="ChEBI" id="CHEBI:15378"/>
        <dbReference type="ChEBI" id="CHEBI:29101"/>
    </reaction>
    <physiologicalReaction direction="left-to-right" evidence="1">
        <dbReference type="Rhea" id="RHEA:29248"/>
    </physiologicalReaction>
</comment>
<comment type="subcellular location">
    <subcellularLocation>
        <location evidence="1">Cell inner membrane</location>
        <topology evidence="1">Multi-pass membrane protein</topology>
    </subcellularLocation>
</comment>
<comment type="similarity">
    <text evidence="1">Belongs to the NhaB Na(+)/H(+) (TC 2.A.34) antiporter family.</text>
</comment>
<comment type="sequence caution" evidence="2">
    <conflict type="erroneous initiation">
        <sequence resource="EMBL-CDS" id="AAX87479"/>
    </conflict>
</comment>
<proteinExistence type="inferred from homology"/>
<dbReference type="EMBL" id="CP000057">
    <property type="protein sequence ID" value="AAX87479.1"/>
    <property type="status" value="ALT_INIT"/>
    <property type="molecule type" value="Genomic_DNA"/>
</dbReference>
<dbReference type="RefSeq" id="WP_038440590.1">
    <property type="nucleotide sequence ID" value="NC_007146.2"/>
</dbReference>
<dbReference type="SMR" id="Q4QNB8"/>
<dbReference type="GeneID" id="93219440"/>
<dbReference type="KEGG" id="hit:NTHI0551"/>
<dbReference type="HOGENOM" id="CLU_041110_0_0_6"/>
<dbReference type="Proteomes" id="UP000002525">
    <property type="component" value="Chromosome"/>
</dbReference>
<dbReference type="GO" id="GO:0005886">
    <property type="term" value="C:plasma membrane"/>
    <property type="evidence" value="ECO:0007669"/>
    <property type="project" value="UniProtKB-SubCell"/>
</dbReference>
<dbReference type="GO" id="GO:0015385">
    <property type="term" value="F:sodium:proton antiporter activity"/>
    <property type="evidence" value="ECO:0007669"/>
    <property type="project" value="InterPro"/>
</dbReference>
<dbReference type="HAMAP" id="MF_01599">
    <property type="entry name" value="NhaB"/>
    <property type="match status" value="1"/>
</dbReference>
<dbReference type="InterPro" id="IPR004671">
    <property type="entry name" value="Na+/H+_antiporter_NhaB"/>
</dbReference>
<dbReference type="NCBIfam" id="TIGR00774">
    <property type="entry name" value="NhaB"/>
    <property type="match status" value="1"/>
</dbReference>
<dbReference type="NCBIfam" id="NF007093">
    <property type="entry name" value="PRK09547.1"/>
    <property type="match status" value="1"/>
</dbReference>
<dbReference type="PANTHER" id="PTHR43302:SF1">
    <property type="entry name" value="NA(+)_H(+) ANTIPORTER NHAB"/>
    <property type="match status" value="1"/>
</dbReference>
<dbReference type="PANTHER" id="PTHR43302">
    <property type="entry name" value="TRANSPORTER ARSB-RELATED"/>
    <property type="match status" value="1"/>
</dbReference>
<dbReference type="Pfam" id="PF06450">
    <property type="entry name" value="NhaB"/>
    <property type="match status" value="1"/>
</dbReference>
<sequence>MTNIQAFMKNFLGASPEWYKLAIVVFLIINPIVFFFISPFIAGWLLVAEFIFTLAMALKCYPLQPGGLLAIEAIIIGMTNAKHVKAEIMANFEVILLLIFMVAGIFFMKQLLLYVFTKLLVKIRSKIALSIAFCFSAAFLSAFLDALTVVAVIISVAMGFYGVYHKVASGNNLIDAVDISDDRKIIEQQHEILEKFRAFLRSLMMHAGVGTALGGVMTVVGEPQNLIIAEQAKWNFMEFFLRMAPVTIPVFICGLLTCFLVEKFKLFGYGEKLPDEVWKVLSDLDRTNSEKMSKQDKIKLGMQALIAIWLILGLAFHLAAVGLIGLSIIIFATSFTGVTDEHTIGKAFQESLPFTALLVVFFSVVAVIIDQKLFSPIIHFVLSAEENTQLALFYLFNGLLSSISDNVFVATVYINEAKAALTNGVIAPHQFELLSVAINTGTNLPSVATPNGQAAFLFLLTSSISPLIRLSYGRMVYMALPYTIVLSIIGLLAIEFILPAATIWLASLGLILPI</sequence>
<organism>
    <name type="scientific">Haemophilus influenzae (strain 86-028NP)</name>
    <dbReference type="NCBI Taxonomy" id="281310"/>
    <lineage>
        <taxon>Bacteria</taxon>
        <taxon>Pseudomonadati</taxon>
        <taxon>Pseudomonadota</taxon>
        <taxon>Gammaproteobacteria</taxon>
        <taxon>Pasteurellales</taxon>
        <taxon>Pasteurellaceae</taxon>
        <taxon>Haemophilus</taxon>
    </lineage>
</organism>
<name>NHAB_HAEI8</name>
<keyword id="KW-0050">Antiport</keyword>
<keyword id="KW-0997">Cell inner membrane</keyword>
<keyword id="KW-1003">Cell membrane</keyword>
<keyword id="KW-0406">Ion transport</keyword>
<keyword id="KW-0472">Membrane</keyword>
<keyword id="KW-0915">Sodium</keyword>
<keyword id="KW-0739">Sodium transport</keyword>
<keyword id="KW-0812">Transmembrane</keyword>
<keyword id="KW-1133">Transmembrane helix</keyword>
<keyword id="KW-0813">Transport</keyword>
<protein>
    <recommendedName>
        <fullName evidence="1">Na(+)/H(+) antiporter NhaB</fullName>
    </recommendedName>
    <alternativeName>
        <fullName evidence="1">Sodium/proton antiporter NhaB</fullName>
    </alternativeName>
</protein>
<evidence type="ECO:0000255" key="1">
    <source>
        <dbReference type="HAMAP-Rule" id="MF_01599"/>
    </source>
</evidence>
<evidence type="ECO:0000305" key="2"/>
<gene>
    <name evidence="1" type="primary">nhaB</name>
    <name type="ordered locus">NTHI0551</name>
</gene>
<reference key="1">
    <citation type="journal article" date="2005" name="J. Bacteriol.">
        <title>Genomic sequence of an otitis media isolate of nontypeable Haemophilus influenzae: comparative study with H. influenzae serotype d, strain KW20.</title>
        <authorList>
            <person name="Harrison A."/>
            <person name="Dyer D.W."/>
            <person name="Gillaspy A."/>
            <person name="Ray W.C."/>
            <person name="Mungur R."/>
            <person name="Carson M.B."/>
            <person name="Zhong H."/>
            <person name="Gipson J."/>
            <person name="Gipson M."/>
            <person name="Johnson L.S."/>
            <person name="Lewis L."/>
            <person name="Bakaletz L.O."/>
            <person name="Munson R.S. Jr."/>
        </authorList>
    </citation>
    <scope>NUCLEOTIDE SEQUENCE [LARGE SCALE GENOMIC DNA]</scope>
    <source>
        <strain>86-028NP</strain>
    </source>
</reference>
<feature type="chain" id="PRO_0000333096" description="Na(+)/H(+) antiporter NhaB">
    <location>
        <begin position="1"/>
        <end position="514"/>
    </location>
</feature>
<feature type="transmembrane region" description="Helical" evidence="1">
    <location>
        <begin position="21"/>
        <end position="41"/>
    </location>
</feature>
<feature type="transmembrane region" description="Helical" evidence="1">
    <location>
        <begin position="43"/>
        <end position="63"/>
    </location>
</feature>
<feature type="transmembrane region" description="Helical" evidence="1">
    <location>
        <begin position="88"/>
        <end position="108"/>
    </location>
</feature>
<feature type="transmembrane region" description="Helical" evidence="1">
    <location>
        <begin position="143"/>
        <end position="163"/>
    </location>
</feature>
<feature type="transmembrane region" description="Helical" evidence="1">
    <location>
        <begin position="203"/>
        <end position="223"/>
    </location>
</feature>
<feature type="transmembrane region" description="Helical" evidence="1">
    <location>
        <begin position="239"/>
        <end position="259"/>
    </location>
</feature>
<feature type="transmembrane region" description="Helical" evidence="1">
    <location>
        <begin position="304"/>
        <end position="324"/>
    </location>
</feature>
<feature type="transmembrane region" description="Helical" evidence="1">
    <location>
        <begin position="349"/>
        <end position="369"/>
    </location>
</feature>
<feature type="transmembrane region" description="Helical" evidence="1">
    <location>
        <begin position="390"/>
        <end position="410"/>
    </location>
</feature>
<feature type="transmembrane region" description="Helical" evidence="1">
    <location>
        <begin position="448"/>
        <end position="468"/>
    </location>
</feature>
<feature type="transmembrane region" description="Helical" evidence="1">
    <location>
        <begin position="484"/>
        <end position="504"/>
    </location>
</feature>